<sequence length="610" mass="68188">MSDQFDAKAFLKTVTSQPGVYRMYDAGGTVIYVGKAKDLKKRLSSYFRSNLASRKTEALVAQIQQIDVTVTHTETEALLLEHNYIKLYQPRYNVLLRDDKSYPFIFLSGDTHPRLAMHRGAKHAKGEYFGPFPNGYAVRETLALLQKIFPIRQCENSVYRNRSRPCLQYQIGRCLGPCVEGLVSEEEYAQQVEYVRLFLSGKDDQVLTQLISRMETASQNLEFEEAARIRDQIQAVRRVTEKQFVSNTGDDLDVIGVAFDAGMACVHVLFIRQGKVLGSRSYFPKVPGGTELSEVVETFVGQFYLQGSQMRTLPGEILLDFNLSDKTLLADSLSELAGRKINVQTKPRGDRARYLKLARTNAATALTSKLSQQSTVHQRLTALASVLKLPEVKRMECFDISHTMGEQTVASCVVFDANGPLRAEYRRYNITGITPGDDYAAMNQVLRRRYGKAIDDSKIPDVILIDGGKGQLAQAKNVFAELDVSWDKNHPLLLGVAKGADRKAGLETLFFEPEGEGFSLPPDSPALHVIQHIRDESHDHAIGGHRKKRAKVKNTSSLETIEGVGPKRRQMLLKYMGGLQGLRNASVEEIAKVPGISQGLAEKIFWSLKH</sequence>
<gene>
    <name type="primary">uvrC</name>
    <name type="ordered locus">c2326</name>
</gene>
<accession>P0A8G1</accession>
<accession>P07028</accession>
<accession>P76311</accession>
<accession>Q8XBD5</accession>
<proteinExistence type="inferred from homology"/>
<dbReference type="EMBL" id="AE014075">
    <property type="protein sequence ID" value="AAN80785.1"/>
    <property type="molecule type" value="Genomic_DNA"/>
</dbReference>
<dbReference type="RefSeq" id="WP_001283421.1">
    <property type="nucleotide sequence ID" value="NZ_CP051263.1"/>
</dbReference>
<dbReference type="SMR" id="P0A8G1"/>
<dbReference type="STRING" id="199310.c2326"/>
<dbReference type="GeneID" id="93776218"/>
<dbReference type="KEGG" id="ecc:c2326"/>
<dbReference type="eggNOG" id="COG0322">
    <property type="taxonomic scope" value="Bacteria"/>
</dbReference>
<dbReference type="HOGENOM" id="CLU_014841_3_0_6"/>
<dbReference type="BioCyc" id="ECOL199310:C2326-MONOMER"/>
<dbReference type="Proteomes" id="UP000001410">
    <property type="component" value="Chromosome"/>
</dbReference>
<dbReference type="GO" id="GO:0005737">
    <property type="term" value="C:cytoplasm"/>
    <property type="evidence" value="ECO:0007669"/>
    <property type="project" value="UniProtKB-SubCell"/>
</dbReference>
<dbReference type="GO" id="GO:0009380">
    <property type="term" value="C:excinuclease repair complex"/>
    <property type="evidence" value="ECO:0007669"/>
    <property type="project" value="InterPro"/>
</dbReference>
<dbReference type="GO" id="GO:0003677">
    <property type="term" value="F:DNA binding"/>
    <property type="evidence" value="ECO:0007669"/>
    <property type="project" value="UniProtKB-UniRule"/>
</dbReference>
<dbReference type="GO" id="GO:0009381">
    <property type="term" value="F:excinuclease ABC activity"/>
    <property type="evidence" value="ECO:0007669"/>
    <property type="project" value="UniProtKB-UniRule"/>
</dbReference>
<dbReference type="GO" id="GO:0006289">
    <property type="term" value="P:nucleotide-excision repair"/>
    <property type="evidence" value="ECO:0007669"/>
    <property type="project" value="UniProtKB-UniRule"/>
</dbReference>
<dbReference type="GO" id="GO:0009432">
    <property type="term" value="P:SOS response"/>
    <property type="evidence" value="ECO:0007669"/>
    <property type="project" value="UniProtKB-UniRule"/>
</dbReference>
<dbReference type="CDD" id="cd10434">
    <property type="entry name" value="GIY-YIG_UvrC_Cho"/>
    <property type="match status" value="1"/>
</dbReference>
<dbReference type="FunFam" id="1.10.150.20:FF:000005">
    <property type="entry name" value="UvrABC system protein C"/>
    <property type="match status" value="1"/>
</dbReference>
<dbReference type="FunFam" id="3.30.420.340:FF:000001">
    <property type="entry name" value="UvrABC system protein C"/>
    <property type="match status" value="1"/>
</dbReference>
<dbReference type="FunFam" id="3.40.1440.10:FF:000001">
    <property type="entry name" value="UvrABC system protein C"/>
    <property type="match status" value="1"/>
</dbReference>
<dbReference type="FunFam" id="4.10.860.10:FF:000002">
    <property type="entry name" value="UvrABC system protein C"/>
    <property type="match status" value="1"/>
</dbReference>
<dbReference type="Gene3D" id="1.10.150.20">
    <property type="entry name" value="5' to 3' exonuclease, C-terminal subdomain"/>
    <property type="match status" value="1"/>
</dbReference>
<dbReference type="Gene3D" id="3.40.1440.10">
    <property type="entry name" value="GIY-YIG endonuclease"/>
    <property type="match status" value="1"/>
</dbReference>
<dbReference type="Gene3D" id="4.10.860.10">
    <property type="entry name" value="UVR domain"/>
    <property type="match status" value="1"/>
</dbReference>
<dbReference type="Gene3D" id="3.30.420.340">
    <property type="entry name" value="UvrC, RNAse H endonuclease domain"/>
    <property type="match status" value="1"/>
</dbReference>
<dbReference type="HAMAP" id="MF_00203">
    <property type="entry name" value="UvrC"/>
    <property type="match status" value="1"/>
</dbReference>
<dbReference type="InterPro" id="IPR000305">
    <property type="entry name" value="GIY-YIG_endonuc"/>
</dbReference>
<dbReference type="InterPro" id="IPR035901">
    <property type="entry name" value="GIY-YIG_endonuc_sf"/>
</dbReference>
<dbReference type="InterPro" id="IPR047296">
    <property type="entry name" value="GIY-YIG_UvrC_Cho"/>
</dbReference>
<dbReference type="InterPro" id="IPR003583">
    <property type="entry name" value="Hlx-hairpin-Hlx_DNA-bd_motif"/>
</dbReference>
<dbReference type="InterPro" id="IPR010994">
    <property type="entry name" value="RuvA_2-like"/>
</dbReference>
<dbReference type="InterPro" id="IPR001943">
    <property type="entry name" value="UVR_dom"/>
</dbReference>
<dbReference type="InterPro" id="IPR036876">
    <property type="entry name" value="UVR_dom_sf"/>
</dbReference>
<dbReference type="InterPro" id="IPR050066">
    <property type="entry name" value="UvrABC_protein_C"/>
</dbReference>
<dbReference type="InterPro" id="IPR004791">
    <property type="entry name" value="UvrC"/>
</dbReference>
<dbReference type="InterPro" id="IPR001162">
    <property type="entry name" value="UvrC_RNase_H_dom"/>
</dbReference>
<dbReference type="InterPro" id="IPR038476">
    <property type="entry name" value="UvrC_RNase_H_dom_sf"/>
</dbReference>
<dbReference type="NCBIfam" id="NF001824">
    <property type="entry name" value="PRK00558.1-5"/>
    <property type="match status" value="1"/>
</dbReference>
<dbReference type="NCBIfam" id="TIGR00194">
    <property type="entry name" value="uvrC"/>
    <property type="match status" value="1"/>
</dbReference>
<dbReference type="PANTHER" id="PTHR30562:SF1">
    <property type="entry name" value="UVRABC SYSTEM PROTEIN C"/>
    <property type="match status" value="1"/>
</dbReference>
<dbReference type="PANTHER" id="PTHR30562">
    <property type="entry name" value="UVRC/OXIDOREDUCTASE"/>
    <property type="match status" value="1"/>
</dbReference>
<dbReference type="Pfam" id="PF01541">
    <property type="entry name" value="GIY-YIG"/>
    <property type="match status" value="1"/>
</dbReference>
<dbReference type="Pfam" id="PF14520">
    <property type="entry name" value="HHH_5"/>
    <property type="match status" value="1"/>
</dbReference>
<dbReference type="Pfam" id="PF02151">
    <property type="entry name" value="UVR"/>
    <property type="match status" value="1"/>
</dbReference>
<dbReference type="Pfam" id="PF22920">
    <property type="entry name" value="UvrC_RNaseH"/>
    <property type="match status" value="1"/>
</dbReference>
<dbReference type="Pfam" id="PF08459">
    <property type="entry name" value="UvrC_RNaseH_dom"/>
    <property type="match status" value="1"/>
</dbReference>
<dbReference type="SMART" id="SM00465">
    <property type="entry name" value="GIYc"/>
    <property type="match status" value="1"/>
</dbReference>
<dbReference type="SMART" id="SM00278">
    <property type="entry name" value="HhH1"/>
    <property type="match status" value="2"/>
</dbReference>
<dbReference type="SUPFAM" id="SSF46600">
    <property type="entry name" value="C-terminal UvrC-binding domain of UvrB"/>
    <property type="match status" value="1"/>
</dbReference>
<dbReference type="SUPFAM" id="SSF82771">
    <property type="entry name" value="GIY-YIG endonuclease"/>
    <property type="match status" value="1"/>
</dbReference>
<dbReference type="SUPFAM" id="SSF47781">
    <property type="entry name" value="RuvA domain 2-like"/>
    <property type="match status" value="1"/>
</dbReference>
<dbReference type="PROSITE" id="PS50164">
    <property type="entry name" value="GIY_YIG"/>
    <property type="match status" value="1"/>
</dbReference>
<dbReference type="PROSITE" id="PS50151">
    <property type="entry name" value="UVR"/>
    <property type="match status" value="1"/>
</dbReference>
<dbReference type="PROSITE" id="PS50165">
    <property type="entry name" value="UVRC"/>
    <property type="match status" value="1"/>
</dbReference>
<reference key="1">
    <citation type="journal article" date="2002" name="Proc. Natl. Acad. Sci. U.S.A.">
        <title>Extensive mosaic structure revealed by the complete genome sequence of uropathogenic Escherichia coli.</title>
        <authorList>
            <person name="Welch R.A."/>
            <person name="Burland V."/>
            <person name="Plunkett G. III"/>
            <person name="Redford P."/>
            <person name="Roesch P."/>
            <person name="Rasko D."/>
            <person name="Buckles E.L."/>
            <person name="Liou S.-R."/>
            <person name="Boutin A."/>
            <person name="Hackett J."/>
            <person name="Stroud D."/>
            <person name="Mayhew G.F."/>
            <person name="Rose D.J."/>
            <person name="Zhou S."/>
            <person name="Schwartz D.C."/>
            <person name="Perna N.T."/>
            <person name="Mobley H.L.T."/>
            <person name="Donnenberg M.S."/>
            <person name="Blattner F.R."/>
        </authorList>
    </citation>
    <scope>NUCLEOTIDE SEQUENCE [LARGE SCALE GENOMIC DNA]</scope>
    <source>
        <strain>CFT073 / ATCC 700928 / UPEC</strain>
    </source>
</reference>
<feature type="chain" id="PRO_0000138302" description="UvrABC system protein C">
    <location>
        <begin position="1"/>
        <end position="610"/>
    </location>
</feature>
<feature type="domain" description="GIY-YIG">
    <location>
        <begin position="16"/>
        <end position="94"/>
    </location>
</feature>
<feature type="domain" description="UVR">
    <location>
        <begin position="204"/>
        <end position="239"/>
    </location>
</feature>
<evidence type="ECO:0000250" key="1"/>
<evidence type="ECO:0000305" key="2"/>
<protein>
    <recommendedName>
        <fullName>UvrABC system protein C</fullName>
        <shortName>Protein UvrC</shortName>
    </recommendedName>
    <alternativeName>
        <fullName>Excinuclease ABC subunit C</fullName>
    </alternativeName>
</protein>
<comment type="function">
    <text evidence="1">The UvrABC repair system catalyzes the recognition and processing of DNA lesions. UvrC both incises the 5' and 3' sides of the lesion. The N-terminal half is responsible for the 3' incision and the C-terminal half is responsible for the 5' incision (By similarity).</text>
</comment>
<comment type="subunit">
    <text evidence="1">Interacts with UvrB in an incision complex.</text>
</comment>
<comment type="subcellular location">
    <subcellularLocation>
        <location evidence="1">Cytoplasm</location>
    </subcellularLocation>
</comment>
<comment type="similarity">
    <text evidence="2">Belongs to the UvrC family.</text>
</comment>
<organism>
    <name type="scientific">Escherichia coli O6:H1 (strain CFT073 / ATCC 700928 / UPEC)</name>
    <dbReference type="NCBI Taxonomy" id="199310"/>
    <lineage>
        <taxon>Bacteria</taxon>
        <taxon>Pseudomonadati</taxon>
        <taxon>Pseudomonadota</taxon>
        <taxon>Gammaproteobacteria</taxon>
        <taxon>Enterobacterales</taxon>
        <taxon>Enterobacteriaceae</taxon>
        <taxon>Escherichia</taxon>
    </lineage>
</organism>
<keyword id="KW-0963">Cytoplasm</keyword>
<keyword id="KW-0227">DNA damage</keyword>
<keyword id="KW-0228">DNA excision</keyword>
<keyword id="KW-0234">DNA repair</keyword>
<keyword id="KW-0267">Excision nuclease</keyword>
<keyword id="KW-1185">Reference proteome</keyword>
<keyword id="KW-0742">SOS response</keyword>
<name>UVRC_ECOL6</name>